<comment type="function">
    <text evidence="1">Fluoride-specific ion channel. Important for reducing fluoride concentration in the cell, thus reducing its toxicity.</text>
</comment>
<comment type="catalytic activity">
    <reaction evidence="1">
        <text>fluoride(in) = fluoride(out)</text>
        <dbReference type="Rhea" id="RHEA:76159"/>
        <dbReference type="ChEBI" id="CHEBI:17051"/>
    </reaction>
    <physiologicalReaction direction="left-to-right" evidence="1">
        <dbReference type="Rhea" id="RHEA:76160"/>
    </physiologicalReaction>
</comment>
<comment type="activity regulation">
    <text evidence="1">Na(+) is not transported, but it plays an essential structural role and its presence is essential for fluoride channel function.</text>
</comment>
<comment type="subcellular location">
    <subcellularLocation>
        <location evidence="1">Cell membrane</location>
        <topology evidence="1">Multi-pass membrane protein</topology>
    </subcellularLocation>
</comment>
<comment type="similarity">
    <text evidence="1">Belongs to the fluoride channel Fluc/FEX (TC 1.A.43) family.</text>
</comment>
<accession>P61383</accession>
<accession>Q99T85</accession>
<gene>
    <name evidence="1" type="primary">fluC2</name>
    <name evidence="1" type="synonym">crcB2</name>
    <name type="ordered locus">SAV1784</name>
</gene>
<sequence>MISIILVMIGGGFGAIARSAITDYFNHKFTSKLPIATLIVNLVGSFLIGLTIGLSISISWFPAFFVTGFLGGLTTFSTLAKELTLMMTPKFDINLFLNYSLLQFIIGFIACYIGYHI</sequence>
<feature type="chain" id="PRO_0000110176" description="Fluoride-specific ion channel FluC 2">
    <location>
        <begin position="1"/>
        <end position="117"/>
    </location>
</feature>
<feature type="transmembrane region" description="Helical" evidence="1">
    <location>
        <begin position="1"/>
        <end position="21"/>
    </location>
</feature>
<feature type="transmembrane region" description="Helical" evidence="1">
    <location>
        <begin position="46"/>
        <end position="66"/>
    </location>
</feature>
<feature type="transmembrane region" description="Helical" evidence="1">
    <location>
        <begin position="95"/>
        <end position="115"/>
    </location>
</feature>
<feature type="binding site" evidence="1">
    <location>
        <position position="71"/>
    </location>
    <ligand>
        <name>Na(+)</name>
        <dbReference type="ChEBI" id="CHEBI:29101"/>
        <note>structural</note>
    </ligand>
</feature>
<feature type="binding site" evidence="1">
    <location>
        <position position="74"/>
    </location>
    <ligand>
        <name>Na(+)</name>
        <dbReference type="ChEBI" id="CHEBI:29101"/>
        <note>structural</note>
    </ligand>
</feature>
<keyword id="KW-1003">Cell membrane</keyword>
<keyword id="KW-0407">Ion channel</keyword>
<keyword id="KW-0406">Ion transport</keyword>
<keyword id="KW-0472">Membrane</keyword>
<keyword id="KW-0479">Metal-binding</keyword>
<keyword id="KW-0915">Sodium</keyword>
<keyword id="KW-0812">Transmembrane</keyword>
<keyword id="KW-1133">Transmembrane helix</keyword>
<keyword id="KW-0813">Transport</keyword>
<protein>
    <recommendedName>
        <fullName evidence="1">Fluoride-specific ion channel FluC 2</fullName>
    </recommendedName>
</protein>
<reference key="1">
    <citation type="journal article" date="2001" name="Lancet">
        <title>Whole genome sequencing of meticillin-resistant Staphylococcus aureus.</title>
        <authorList>
            <person name="Kuroda M."/>
            <person name="Ohta T."/>
            <person name="Uchiyama I."/>
            <person name="Baba T."/>
            <person name="Yuzawa H."/>
            <person name="Kobayashi I."/>
            <person name="Cui L."/>
            <person name="Oguchi A."/>
            <person name="Aoki K."/>
            <person name="Nagai Y."/>
            <person name="Lian J.-Q."/>
            <person name="Ito T."/>
            <person name="Kanamori M."/>
            <person name="Matsumaru H."/>
            <person name="Maruyama A."/>
            <person name="Murakami H."/>
            <person name="Hosoyama A."/>
            <person name="Mizutani-Ui Y."/>
            <person name="Takahashi N.K."/>
            <person name="Sawano T."/>
            <person name="Inoue R."/>
            <person name="Kaito C."/>
            <person name="Sekimizu K."/>
            <person name="Hirakawa H."/>
            <person name="Kuhara S."/>
            <person name="Goto S."/>
            <person name="Yabuzaki J."/>
            <person name="Kanehisa M."/>
            <person name="Yamashita A."/>
            <person name="Oshima K."/>
            <person name="Furuya K."/>
            <person name="Yoshino C."/>
            <person name="Shiba T."/>
            <person name="Hattori M."/>
            <person name="Ogasawara N."/>
            <person name="Hayashi H."/>
            <person name="Hiramatsu K."/>
        </authorList>
    </citation>
    <scope>NUCLEOTIDE SEQUENCE [LARGE SCALE GENOMIC DNA]</scope>
    <source>
        <strain>Mu50 / ATCC 700699</strain>
    </source>
</reference>
<proteinExistence type="inferred from homology"/>
<evidence type="ECO:0000255" key="1">
    <source>
        <dbReference type="HAMAP-Rule" id="MF_00454"/>
    </source>
</evidence>
<name>FLUC2_STAAM</name>
<organism>
    <name type="scientific">Staphylococcus aureus (strain Mu50 / ATCC 700699)</name>
    <dbReference type="NCBI Taxonomy" id="158878"/>
    <lineage>
        <taxon>Bacteria</taxon>
        <taxon>Bacillati</taxon>
        <taxon>Bacillota</taxon>
        <taxon>Bacilli</taxon>
        <taxon>Bacillales</taxon>
        <taxon>Staphylococcaceae</taxon>
        <taxon>Staphylococcus</taxon>
    </lineage>
</organism>
<dbReference type="EMBL" id="BA000017">
    <property type="protein sequence ID" value="BAB57946.1"/>
    <property type="molecule type" value="Genomic_DNA"/>
</dbReference>
<dbReference type="RefSeq" id="WP_000623470.1">
    <property type="nucleotide sequence ID" value="NC_002758.2"/>
</dbReference>
<dbReference type="SMR" id="P61383"/>
<dbReference type="KEGG" id="sav:SAV1784"/>
<dbReference type="HOGENOM" id="CLU_114342_2_3_9"/>
<dbReference type="Proteomes" id="UP000002481">
    <property type="component" value="Chromosome"/>
</dbReference>
<dbReference type="GO" id="GO:0005886">
    <property type="term" value="C:plasma membrane"/>
    <property type="evidence" value="ECO:0007669"/>
    <property type="project" value="UniProtKB-SubCell"/>
</dbReference>
<dbReference type="GO" id="GO:0062054">
    <property type="term" value="F:fluoride channel activity"/>
    <property type="evidence" value="ECO:0007669"/>
    <property type="project" value="UniProtKB-UniRule"/>
</dbReference>
<dbReference type="GO" id="GO:0046872">
    <property type="term" value="F:metal ion binding"/>
    <property type="evidence" value="ECO:0007669"/>
    <property type="project" value="UniProtKB-KW"/>
</dbReference>
<dbReference type="GO" id="GO:0140114">
    <property type="term" value="P:cellular detoxification of fluoride"/>
    <property type="evidence" value="ECO:0007669"/>
    <property type="project" value="UniProtKB-UniRule"/>
</dbReference>
<dbReference type="HAMAP" id="MF_00454">
    <property type="entry name" value="FluC"/>
    <property type="match status" value="1"/>
</dbReference>
<dbReference type="InterPro" id="IPR003691">
    <property type="entry name" value="FluC"/>
</dbReference>
<dbReference type="PANTHER" id="PTHR28259">
    <property type="entry name" value="FLUORIDE EXPORT PROTEIN 1-RELATED"/>
    <property type="match status" value="1"/>
</dbReference>
<dbReference type="PANTHER" id="PTHR28259:SF16">
    <property type="entry name" value="FLUORIDE-SPECIFIC ION CHANNEL FLUC 2"/>
    <property type="match status" value="1"/>
</dbReference>
<dbReference type="Pfam" id="PF02537">
    <property type="entry name" value="CRCB"/>
    <property type="match status" value="1"/>
</dbReference>